<comment type="function">
    <text>Transfers 2-(5''-triphosphoribosyl)-3'-dephosphocoenzyme-A on a serine residue to the apo-acyl carrier protein (gamma chain) of the citrate lyase to yield holo-acyl carrier protein.</text>
</comment>
<comment type="catalytic activity">
    <reaction>
        <text>apo-[citrate lyase ACP] + 2'-(5''-triphospho-alpha-D-ribosyl)-3'-dephospho-CoA = holo-[citrate lyase ACP] + diphosphate</text>
        <dbReference type="Rhea" id="RHEA:16333"/>
        <dbReference type="Rhea" id="RHEA-COMP:10157"/>
        <dbReference type="Rhea" id="RHEA-COMP:10158"/>
        <dbReference type="ChEBI" id="CHEBI:29999"/>
        <dbReference type="ChEBI" id="CHEBI:33019"/>
        <dbReference type="ChEBI" id="CHEBI:61378"/>
        <dbReference type="ChEBI" id="CHEBI:82683"/>
        <dbReference type="EC" id="2.7.7.61"/>
    </reaction>
</comment>
<comment type="similarity">
    <text evidence="1">Belongs to the CitX family.</text>
</comment>
<sequence length="183" mass="20270">MHLLPELASHHAVSIPELLVSRDERQARQHVWLKRHPVPLVSFTVVAPGPIKDSEVTRRIFNHGVTALRALAAKQGWQIQEQAALVSASGPEGMLSIAAPARDLKLATIELEHSHPLGRLWDIDVLTPEGEILSRRDYSLPPRRCLLCEQSAAVCARGKTHQLTDLLNRMEALLNDVDACNVN</sequence>
<dbReference type="EC" id="2.7.7.61"/>
<dbReference type="EMBL" id="AE005174">
    <property type="protein sequence ID" value="AAG54949.1"/>
    <property type="molecule type" value="Genomic_DNA"/>
</dbReference>
<dbReference type="EMBL" id="BA000007">
    <property type="protein sequence ID" value="BAB34076.1"/>
    <property type="molecule type" value="Genomic_DNA"/>
</dbReference>
<dbReference type="PIR" id="E90710">
    <property type="entry name" value="E90710"/>
</dbReference>
<dbReference type="RefSeq" id="NP_308680.1">
    <property type="nucleotide sequence ID" value="NC_002695.1"/>
</dbReference>
<dbReference type="RefSeq" id="WP_000550422.1">
    <property type="nucleotide sequence ID" value="NZ_VOAI01000012.1"/>
</dbReference>
<dbReference type="SMR" id="P0A6G6"/>
<dbReference type="STRING" id="155864.Z0758"/>
<dbReference type="GeneID" id="917013"/>
<dbReference type="GeneID" id="93776871"/>
<dbReference type="KEGG" id="ece:Z0758"/>
<dbReference type="KEGG" id="ecs:ECs_0653"/>
<dbReference type="PATRIC" id="fig|386585.9.peg.764"/>
<dbReference type="eggNOG" id="COG3697">
    <property type="taxonomic scope" value="Bacteria"/>
</dbReference>
<dbReference type="HOGENOM" id="CLU_104529_1_1_6"/>
<dbReference type="OMA" id="GYEYYLV"/>
<dbReference type="Proteomes" id="UP000000558">
    <property type="component" value="Chromosome"/>
</dbReference>
<dbReference type="Proteomes" id="UP000002519">
    <property type="component" value="Chromosome"/>
</dbReference>
<dbReference type="GO" id="GO:0050519">
    <property type="term" value="F:holo-citrate lyase synthase activity"/>
    <property type="evidence" value="ECO:0007669"/>
    <property type="project" value="UniProtKB-UniRule"/>
</dbReference>
<dbReference type="GO" id="GO:0051191">
    <property type="term" value="P:prosthetic group biosynthetic process"/>
    <property type="evidence" value="ECO:0007669"/>
    <property type="project" value="InterPro"/>
</dbReference>
<dbReference type="HAMAP" id="MF_00398">
    <property type="entry name" value="CitX"/>
    <property type="match status" value="1"/>
</dbReference>
<dbReference type="InterPro" id="IPR005551">
    <property type="entry name" value="CitX"/>
</dbReference>
<dbReference type="NCBIfam" id="TIGR03124">
    <property type="entry name" value="citrate_citX"/>
    <property type="match status" value="1"/>
</dbReference>
<dbReference type="NCBIfam" id="NF002383">
    <property type="entry name" value="PRK01392.1"/>
    <property type="match status" value="1"/>
</dbReference>
<dbReference type="Pfam" id="PF03802">
    <property type="entry name" value="CitX"/>
    <property type="match status" value="1"/>
</dbReference>
<reference key="1">
    <citation type="journal article" date="2001" name="Nature">
        <title>Genome sequence of enterohaemorrhagic Escherichia coli O157:H7.</title>
        <authorList>
            <person name="Perna N.T."/>
            <person name="Plunkett G. III"/>
            <person name="Burland V."/>
            <person name="Mau B."/>
            <person name="Glasner J.D."/>
            <person name="Rose D.J."/>
            <person name="Mayhew G.F."/>
            <person name="Evans P.S."/>
            <person name="Gregor J."/>
            <person name="Kirkpatrick H.A."/>
            <person name="Posfai G."/>
            <person name="Hackett J."/>
            <person name="Klink S."/>
            <person name="Boutin A."/>
            <person name="Shao Y."/>
            <person name="Miller L."/>
            <person name="Grotbeck E.J."/>
            <person name="Davis N.W."/>
            <person name="Lim A."/>
            <person name="Dimalanta E.T."/>
            <person name="Potamousis K."/>
            <person name="Apodaca J."/>
            <person name="Anantharaman T.S."/>
            <person name="Lin J."/>
            <person name="Yen G."/>
            <person name="Schwartz D.C."/>
            <person name="Welch R.A."/>
            <person name="Blattner F.R."/>
        </authorList>
    </citation>
    <scope>NUCLEOTIDE SEQUENCE [LARGE SCALE GENOMIC DNA]</scope>
    <source>
        <strain>O157:H7 / EDL933 / ATCC 700927 / EHEC</strain>
    </source>
</reference>
<reference key="2">
    <citation type="journal article" date="2001" name="DNA Res.">
        <title>Complete genome sequence of enterohemorrhagic Escherichia coli O157:H7 and genomic comparison with a laboratory strain K-12.</title>
        <authorList>
            <person name="Hayashi T."/>
            <person name="Makino K."/>
            <person name="Ohnishi M."/>
            <person name="Kurokawa K."/>
            <person name="Ishii K."/>
            <person name="Yokoyama K."/>
            <person name="Han C.-G."/>
            <person name="Ohtsubo E."/>
            <person name="Nakayama K."/>
            <person name="Murata T."/>
            <person name="Tanaka M."/>
            <person name="Tobe T."/>
            <person name="Iida T."/>
            <person name="Takami H."/>
            <person name="Honda T."/>
            <person name="Sasakawa C."/>
            <person name="Ogasawara N."/>
            <person name="Yasunaga T."/>
            <person name="Kuhara S."/>
            <person name="Shiba T."/>
            <person name="Hattori M."/>
            <person name="Shinagawa H."/>
        </authorList>
    </citation>
    <scope>NUCLEOTIDE SEQUENCE [LARGE SCALE GENOMIC DNA]</scope>
    <source>
        <strain>O157:H7 / Sakai / RIMD 0509952 / EHEC</strain>
    </source>
</reference>
<name>CITX_ECO57</name>
<proteinExistence type="inferred from homology"/>
<gene>
    <name type="primary">citX</name>
    <name type="ordered locus">Z0758</name>
    <name type="ordered locus">ECs0653</name>
</gene>
<organism>
    <name type="scientific">Escherichia coli O157:H7</name>
    <dbReference type="NCBI Taxonomy" id="83334"/>
    <lineage>
        <taxon>Bacteria</taxon>
        <taxon>Pseudomonadati</taxon>
        <taxon>Pseudomonadota</taxon>
        <taxon>Gammaproteobacteria</taxon>
        <taxon>Enterobacterales</taxon>
        <taxon>Enterobacteriaceae</taxon>
        <taxon>Escherichia</taxon>
    </lineage>
</organism>
<evidence type="ECO:0000305" key="1"/>
<protein>
    <recommendedName>
        <fullName>Apo-citrate lyase phosphoribosyl-dephospho-CoA transferase</fullName>
        <ecNumber>2.7.7.61</ecNumber>
    </recommendedName>
    <alternativeName>
        <fullName>Apo-ACP nucleodityltransferase</fullName>
    </alternativeName>
    <alternativeName>
        <fullName>Holo-ACP synthase</fullName>
    </alternativeName>
    <alternativeName>
        <fullName>Holo-citrate lyase synthase</fullName>
    </alternativeName>
</protein>
<feature type="chain" id="PRO_0000214686" description="Apo-citrate lyase phosphoribosyl-dephospho-CoA transferase">
    <location>
        <begin position="1"/>
        <end position="183"/>
    </location>
</feature>
<keyword id="KW-0548">Nucleotidyltransferase</keyword>
<keyword id="KW-1185">Reference proteome</keyword>
<keyword id="KW-0808">Transferase</keyword>
<accession>P0A6G6</accession>
<accession>P77563</accession>